<gene>
    <name evidence="1" type="primary">hemA</name>
    <name type="ordered locus">P9301_08281</name>
</gene>
<proteinExistence type="inferred from homology"/>
<sequence length="436" mass="48897">MHIVVVGLSHRTAPVEVREKLSIPDQSITESLKALKAFSDVLEVSILSTCNRLEIYALVKDKNTGISSIKEFISEYSGIIFDDLNPHLFCFRQEEAVLHLMKVSAGLDSLVLGEGQILSQVKKMMRLGQENQSTGPILNRLLTQSVSTGKKVRSETNLGTGAVSISSAAVELAQLKIGQEKGFDNLVSLESENVLVVGAGRMSRLLITHLKSKGCHKLILLNRNIDRALNLAQDFPDLEIVCKGLNELEENISLSSLVFTSTASEEPIIDLTKIEKINLSNRLKFIDIGVPRNISNDVKQHEFVKSFDVDDLQEVVSRNQEFRQKIAKEAESLVEEERIIFLEWWASLEAVPVINKLRSDLELIRKEELQKALSRMGPDFSARERKVVEALTKGIINKILHTPVTKLRSPQSREERQVSLKIVEKLFSLVEEDKNN</sequence>
<dbReference type="EC" id="1.2.1.70" evidence="1"/>
<dbReference type="EMBL" id="CP000576">
    <property type="protein sequence ID" value="ABO17451.1"/>
    <property type="molecule type" value="Genomic_DNA"/>
</dbReference>
<dbReference type="RefSeq" id="WP_011862805.1">
    <property type="nucleotide sequence ID" value="NC_009091.1"/>
</dbReference>
<dbReference type="SMR" id="A3PCH6"/>
<dbReference type="STRING" id="167546.P9301_08281"/>
<dbReference type="KEGG" id="pmg:P9301_08281"/>
<dbReference type="eggNOG" id="COG0373">
    <property type="taxonomic scope" value="Bacteria"/>
</dbReference>
<dbReference type="HOGENOM" id="CLU_035113_2_1_3"/>
<dbReference type="OrthoDB" id="110209at2"/>
<dbReference type="UniPathway" id="UPA00251">
    <property type="reaction ID" value="UER00316"/>
</dbReference>
<dbReference type="UniPathway" id="UPA00668"/>
<dbReference type="Proteomes" id="UP000001430">
    <property type="component" value="Chromosome"/>
</dbReference>
<dbReference type="GO" id="GO:0008883">
    <property type="term" value="F:glutamyl-tRNA reductase activity"/>
    <property type="evidence" value="ECO:0007669"/>
    <property type="project" value="UniProtKB-UniRule"/>
</dbReference>
<dbReference type="GO" id="GO:0050661">
    <property type="term" value="F:NADP binding"/>
    <property type="evidence" value="ECO:0007669"/>
    <property type="project" value="InterPro"/>
</dbReference>
<dbReference type="GO" id="GO:0015995">
    <property type="term" value="P:chlorophyll biosynthetic process"/>
    <property type="evidence" value="ECO:0007669"/>
    <property type="project" value="UniProtKB-UniRule"/>
</dbReference>
<dbReference type="GO" id="GO:0006782">
    <property type="term" value="P:protoporphyrinogen IX biosynthetic process"/>
    <property type="evidence" value="ECO:0007669"/>
    <property type="project" value="UniProtKB-UniRule"/>
</dbReference>
<dbReference type="CDD" id="cd05213">
    <property type="entry name" value="NAD_bind_Glutamyl_tRNA_reduct"/>
    <property type="match status" value="1"/>
</dbReference>
<dbReference type="FunFam" id="3.30.460.30:FF:000001">
    <property type="entry name" value="Glutamyl-tRNA reductase"/>
    <property type="match status" value="1"/>
</dbReference>
<dbReference type="Gene3D" id="3.30.460.30">
    <property type="entry name" value="Glutamyl-tRNA reductase, N-terminal domain"/>
    <property type="match status" value="1"/>
</dbReference>
<dbReference type="Gene3D" id="3.40.50.720">
    <property type="entry name" value="NAD(P)-binding Rossmann-like Domain"/>
    <property type="match status" value="1"/>
</dbReference>
<dbReference type="HAMAP" id="MF_00087">
    <property type="entry name" value="Glu_tRNA_reductase"/>
    <property type="match status" value="1"/>
</dbReference>
<dbReference type="InterPro" id="IPR000343">
    <property type="entry name" value="4pyrrol_synth_GluRdtase"/>
</dbReference>
<dbReference type="InterPro" id="IPR015896">
    <property type="entry name" value="4pyrrol_synth_GluRdtase_dimer"/>
</dbReference>
<dbReference type="InterPro" id="IPR015895">
    <property type="entry name" value="4pyrrol_synth_GluRdtase_N"/>
</dbReference>
<dbReference type="InterPro" id="IPR018214">
    <property type="entry name" value="GluRdtase_CS"/>
</dbReference>
<dbReference type="InterPro" id="IPR036453">
    <property type="entry name" value="GluRdtase_dimer_dom_sf"/>
</dbReference>
<dbReference type="InterPro" id="IPR036343">
    <property type="entry name" value="GluRdtase_N_sf"/>
</dbReference>
<dbReference type="InterPro" id="IPR036291">
    <property type="entry name" value="NAD(P)-bd_dom_sf"/>
</dbReference>
<dbReference type="InterPro" id="IPR006151">
    <property type="entry name" value="Shikm_DH/Glu-tRNA_Rdtase"/>
</dbReference>
<dbReference type="NCBIfam" id="TIGR01035">
    <property type="entry name" value="hemA"/>
    <property type="match status" value="1"/>
</dbReference>
<dbReference type="NCBIfam" id="NF000744">
    <property type="entry name" value="PRK00045.1-3"/>
    <property type="match status" value="1"/>
</dbReference>
<dbReference type="PANTHER" id="PTHR43120">
    <property type="entry name" value="GLUTAMYL-TRNA REDUCTASE 1, CHLOROPLASTIC"/>
    <property type="match status" value="1"/>
</dbReference>
<dbReference type="PANTHER" id="PTHR43120:SF1">
    <property type="entry name" value="GLUTAMYL-TRNA REDUCTASE 1, CHLOROPLASTIC"/>
    <property type="match status" value="1"/>
</dbReference>
<dbReference type="Pfam" id="PF00745">
    <property type="entry name" value="GlutR_dimer"/>
    <property type="match status" value="1"/>
</dbReference>
<dbReference type="Pfam" id="PF05201">
    <property type="entry name" value="GlutR_N"/>
    <property type="match status" value="1"/>
</dbReference>
<dbReference type="Pfam" id="PF01488">
    <property type="entry name" value="Shikimate_DH"/>
    <property type="match status" value="1"/>
</dbReference>
<dbReference type="PIRSF" id="PIRSF000445">
    <property type="entry name" value="4pyrrol_synth_GluRdtase"/>
    <property type="match status" value="1"/>
</dbReference>
<dbReference type="SUPFAM" id="SSF69742">
    <property type="entry name" value="Glutamyl tRNA-reductase catalytic, N-terminal domain"/>
    <property type="match status" value="1"/>
</dbReference>
<dbReference type="SUPFAM" id="SSF69075">
    <property type="entry name" value="Glutamyl tRNA-reductase dimerization domain"/>
    <property type="match status" value="1"/>
</dbReference>
<dbReference type="SUPFAM" id="SSF51735">
    <property type="entry name" value="NAD(P)-binding Rossmann-fold domains"/>
    <property type="match status" value="1"/>
</dbReference>
<dbReference type="PROSITE" id="PS00747">
    <property type="entry name" value="GLUTR"/>
    <property type="match status" value="1"/>
</dbReference>
<accession>A3PCH6</accession>
<name>HEM1_PROM0</name>
<feature type="chain" id="PRO_1000004661" description="Glutamyl-tRNA reductase">
    <location>
        <begin position="1"/>
        <end position="436"/>
    </location>
</feature>
<feature type="active site" description="Nucleophile" evidence="1">
    <location>
        <position position="50"/>
    </location>
</feature>
<feature type="binding site" evidence="1">
    <location>
        <begin position="49"/>
        <end position="52"/>
    </location>
    <ligand>
        <name>substrate</name>
    </ligand>
</feature>
<feature type="binding site" evidence="1">
    <location>
        <position position="109"/>
    </location>
    <ligand>
        <name>substrate</name>
    </ligand>
</feature>
<feature type="binding site" evidence="1">
    <location>
        <begin position="114"/>
        <end position="116"/>
    </location>
    <ligand>
        <name>substrate</name>
    </ligand>
</feature>
<feature type="binding site" evidence="1">
    <location>
        <position position="120"/>
    </location>
    <ligand>
        <name>substrate</name>
    </ligand>
</feature>
<feature type="binding site" evidence="1">
    <location>
        <begin position="198"/>
        <end position="203"/>
    </location>
    <ligand>
        <name>NADP(+)</name>
        <dbReference type="ChEBI" id="CHEBI:58349"/>
    </ligand>
</feature>
<feature type="site" description="Important for activity" evidence="1">
    <location>
        <position position="99"/>
    </location>
</feature>
<keyword id="KW-0149">Chlorophyll biosynthesis</keyword>
<keyword id="KW-0521">NADP</keyword>
<keyword id="KW-0560">Oxidoreductase</keyword>
<keyword id="KW-0627">Porphyrin biosynthesis</keyword>
<keyword id="KW-1185">Reference proteome</keyword>
<organism>
    <name type="scientific">Prochlorococcus marinus (strain MIT 9301)</name>
    <dbReference type="NCBI Taxonomy" id="167546"/>
    <lineage>
        <taxon>Bacteria</taxon>
        <taxon>Bacillati</taxon>
        <taxon>Cyanobacteriota</taxon>
        <taxon>Cyanophyceae</taxon>
        <taxon>Synechococcales</taxon>
        <taxon>Prochlorococcaceae</taxon>
        <taxon>Prochlorococcus</taxon>
    </lineage>
</organism>
<protein>
    <recommendedName>
        <fullName evidence="1">Glutamyl-tRNA reductase</fullName>
        <shortName evidence="1">GluTR</shortName>
        <ecNumber evidence="1">1.2.1.70</ecNumber>
    </recommendedName>
</protein>
<reference key="1">
    <citation type="journal article" date="2007" name="PLoS Genet.">
        <title>Patterns and implications of gene gain and loss in the evolution of Prochlorococcus.</title>
        <authorList>
            <person name="Kettler G.C."/>
            <person name="Martiny A.C."/>
            <person name="Huang K."/>
            <person name="Zucker J."/>
            <person name="Coleman M.L."/>
            <person name="Rodrigue S."/>
            <person name="Chen F."/>
            <person name="Lapidus A."/>
            <person name="Ferriera S."/>
            <person name="Johnson J."/>
            <person name="Steglich C."/>
            <person name="Church G.M."/>
            <person name="Richardson P."/>
            <person name="Chisholm S.W."/>
        </authorList>
    </citation>
    <scope>NUCLEOTIDE SEQUENCE [LARGE SCALE GENOMIC DNA]</scope>
    <source>
        <strain>MIT 9301</strain>
    </source>
</reference>
<evidence type="ECO:0000255" key="1">
    <source>
        <dbReference type="HAMAP-Rule" id="MF_00087"/>
    </source>
</evidence>
<comment type="function">
    <text evidence="1">Catalyzes the NADPH-dependent reduction of glutamyl-tRNA(Glu) to glutamate 1-semialdehyde (GSA).</text>
</comment>
<comment type="catalytic activity">
    <reaction evidence="1">
        <text>(S)-4-amino-5-oxopentanoate + tRNA(Glu) + NADP(+) = L-glutamyl-tRNA(Glu) + NADPH + H(+)</text>
        <dbReference type="Rhea" id="RHEA:12344"/>
        <dbReference type="Rhea" id="RHEA-COMP:9663"/>
        <dbReference type="Rhea" id="RHEA-COMP:9680"/>
        <dbReference type="ChEBI" id="CHEBI:15378"/>
        <dbReference type="ChEBI" id="CHEBI:57501"/>
        <dbReference type="ChEBI" id="CHEBI:57783"/>
        <dbReference type="ChEBI" id="CHEBI:58349"/>
        <dbReference type="ChEBI" id="CHEBI:78442"/>
        <dbReference type="ChEBI" id="CHEBI:78520"/>
        <dbReference type="EC" id="1.2.1.70"/>
    </reaction>
</comment>
<comment type="pathway">
    <text evidence="1">Porphyrin-containing compound metabolism; protoporphyrin-IX biosynthesis; 5-aminolevulinate from L-glutamyl-tRNA(Glu): step 1/2.</text>
</comment>
<comment type="pathway">
    <text evidence="1">Porphyrin-containing compound metabolism; chlorophyll biosynthesis.</text>
</comment>
<comment type="subunit">
    <text evidence="1">Homodimer.</text>
</comment>
<comment type="domain">
    <text evidence="1">Possesses an unusual extended V-shaped dimeric structure with each monomer consisting of three distinct domains arranged along a curved 'spinal' alpha-helix. The N-terminal catalytic domain specifically recognizes the glutamate moiety of the substrate. The second domain is the NADPH-binding domain, and the third C-terminal domain is responsible for dimerization.</text>
</comment>
<comment type="miscellaneous">
    <text evidence="1">During catalysis, the active site Cys acts as a nucleophile attacking the alpha-carbonyl group of tRNA-bound glutamate with the formation of a thioester intermediate between enzyme and glutamate, and the concomitant release of tRNA(Glu). The thioester intermediate is finally reduced by direct hydride transfer from NADPH, to form the product GSA.</text>
</comment>
<comment type="similarity">
    <text evidence="1">Belongs to the glutamyl-tRNA reductase family.</text>
</comment>